<evidence type="ECO:0000250" key="1">
    <source>
        <dbReference type="UniProtKB" id="Q61184"/>
    </source>
</evidence>
<evidence type="ECO:0000255" key="2"/>
<evidence type="ECO:0000255" key="3">
    <source>
        <dbReference type="PROSITE-ProRule" id="PRU00521"/>
    </source>
</evidence>
<reference key="1">
    <citation type="journal article" date="1997" name="Mamm. Genome">
        <title>Mapping of the melatonin receptor 1a (MTNR1A) gene in pigs, sheep, and cattle.</title>
        <authorList>
            <person name="Messer L.A."/>
            <person name="Wang L."/>
            <person name="Tuggle C.K."/>
            <person name="Yerle M."/>
            <person name="Chardon P."/>
            <person name="Pomp D."/>
            <person name="Womack J.E."/>
            <person name="Barendse W."/>
            <person name="Crawford A.M."/>
            <person name="Notter D.R."/>
            <person name="Rothschild M.F."/>
        </authorList>
    </citation>
    <scope>NUCLEOTIDE SEQUENCE [GENOMIC DNA]</scope>
    <source>
        <tissue>Hypothalamus</tissue>
        <tissue>Pituitary</tissue>
    </source>
</reference>
<proteinExistence type="inferred from homology"/>
<name>MTR1A_BOVIN</name>
<dbReference type="EMBL" id="U73327">
    <property type="protein sequence ID" value="AAC48725.1"/>
    <property type="molecule type" value="Genomic_DNA"/>
</dbReference>
<dbReference type="SMR" id="O02769"/>
<dbReference type="FunCoup" id="O02769">
    <property type="interactions" value="3"/>
</dbReference>
<dbReference type="STRING" id="9913.ENSBTAP00000054673"/>
<dbReference type="PaxDb" id="9913-ENSBTAP00000054673"/>
<dbReference type="eggNOG" id="KOG3656">
    <property type="taxonomic scope" value="Eukaryota"/>
</dbReference>
<dbReference type="InParanoid" id="O02769"/>
<dbReference type="OrthoDB" id="10044919at2759"/>
<dbReference type="Proteomes" id="UP000009136">
    <property type="component" value="Unplaced"/>
</dbReference>
<dbReference type="GO" id="GO:0005886">
    <property type="term" value="C:plasma membrane"/>
    <property type="evidence" value="ECO:0000318"/>
    <property type="project" value="GO_Central"/>
</dbReference>
<dbReference type="GO" id="GO:0004930">
    <property type="term" value="F:G protein-coupled receptor activity"/>
    <property type="evidence" value="ECO:0000318"/>
    <property type="project" value="GO_Central"/>
</dbReference>
<dbReference type="GO" id="GO:0008502">
    <property type="term" value="F:melatonin receptor activity"/>
    <property type="evidence" value="ECO:0007669"/>
    <property type="project" value="InterPro"/>
</dbReference>
<dbReference type="GO" id="GO:0007186">
    <property type="term" value="P:G protein-coupled receptor signaling pathway"/>
    <property type="evidence" value="ECO:0000318"/>
    <property type="project" value="GO_Central"/>
</dbReference>
<dbReference type="FunFam" id="1.20.1070.10:FF:000442">
    <property type="entry name" value="Melatonin receptor type 1A"/>
    <property type="match status" value="1"/>
</dbReference>
<dbReference type="Gene3D" id="1.20.1070.10">
    <property type="entry name" value="Rhodopsin 7-helix transmembrane proteins"/>
    <property type="match status" value="1"/>
</dbReference>
<dbReference type="InterPro" id="IPR000276">
    <property type="entry name" value="GPCR_Rhodpsn"/>
</dbReference>
<dbReference type="InterPro" id="IPR017452">
    <property type="entry name" value="GPCR_Rhodpsn_7TM"/>
</dbReference>
<dbReference type="InterPro" id="IPR002278">
    <property type="entry name" value="Mel_1A/1B_rcpt"/>
</dbReference>
<dbReference type="InterPro" id="IPR000025">
    <property type="entry name" value="Melatonin_rcpt"/>
</dbReference>
<dbReference type="PANTHER" id="PTHR24228">
    <property type="entry name" value="B2 BRADYKININ RECEPTOR/ANGIOTENSIN II RECEPTOR"/>
    <property type="match status" value="1"/>
</dbReference>
<dbReference type="PANTHER" id="PTHR24228:SF53">
    <property type="entry name" value="MELATONIN RECEPTOR TYPE 1A"/>
    <property type="match status" value="1"/>
</dbReference>
<dbReference type="Pfam" id="PF00001">
    <property type="entry name" value="7tm_1"/>
    <property type="match status" value="1"/>
</dbReference>
<dbReference type="PRINTS" id="PR00237">
    <property type="entry name" value="GPCRRHODOPSN"/>
</dbReference>
<dbReference type="PRINTS" id="PR01149">
    <property type="entry name" value="MELATONIN1AR"/>
</dbReference>
<dbReference type="PRINTS" id="PR00857">
    <property type="entry name" value="MELATONINR"/>
</dbReference>
<dbReference type="SUPFAM" id="SSF81321">
    <property type="entry name" value="Family A G protein-coupled receptor-like"/>
    <property type="match status" value="1"/>
</dbReference>
<dbReference type="PROSITE" id="PS00237">
    <property type="entry name" value="G_PROTEIN_RECEP_F1_1"/>
    <property type="match status" value="1"/>
</dbReference>
<dbReference type="PROSITE" id="PS50262">
    <property type="entry name" value="G_PROTEIN_RECEP_F1_2"/>
    <property type="match status" value="1"/>
</dbReference>
<comment type="function">
    <text evidence="1">High affinity receptor for melatonin. Likely to mediate the reproductive and circadian actions of melatonin. The activity of this receptor is mediated by pertussis toxin sensitive G proteins that inhibit adenylate cyclase activity. Possibly involved in sleep induction, by melatonin activation of the potassium channel KCNMA1/BK and the dissociation of G-beta and G-gamma subunits, thereby decreasing synaptic transmission (By similarity).</text>
</comment>
<comment type="subcellular location">
    <subcellularLocation>
        <location>Cell membrane</location>
        <topology>Multi-pass membrane protein</topology>
    </subcellularLocation>
</comment>
<comment type="similarity">
    <text evidence="3">Belongs to the G-protein coupled receptor 1 family.</text>
</comment>
<protein>
    <recommendedName>
        <fullName>Melatonin receptor type 1A</fullName>
        <shortName>Mel-1A-R</shortName>
        <shortName>Mel1a receptor</shortName>
    </recommendedName>
</protein>
<feature type="chain" id="PRO_0000069861" description="Melatonin receptor type 1A">
    <location>
        <begin position="1" status="less than"/>
        <end position="257" status="greater than"/>
    </location>
</feature>
<feature type="topological domain" description="Extracellular" evidence="2">
    <location>
        <begin position="5"/>
        <end position="22"/>
    </location>
</feature>
<feature type="transmembrane region" description="Helical; Name=3" evidence="2">
    <location>
        <begin position="23"/>
        <end position="43"/>
    </location>
</feature>
<feature type="topological domain" description="Cytoplasmic" evidence="2">
    <location>
        <begin position="44"/>
        <end position="64"/>
    </location>
</feature>
<feature type="transmembrane region" description="Helical; Name=4" evidence="2">
    <location>
        <begin position="65"/>
        <end position="85"/>
    </location>
</feature>
<feature type="topological domain" description="Extracellular" evidence="2">
    <location>
        <begin position="86"/>
        <end position="107"/>
    </location>
</feature>
<feature type="transmembrane region" description="Helical; Name=5" evidence="2">
    <location>
        <begin position="108"/>
        <end position="128"/>
    </location>
</feature>
<feature type="topological domain" description="Cytoplasmic" evidence="2">
    <location>
        <begin position="129"/>
        <end position="160"/>
    </location>
</feature>
<feature type="transmembrane region" description="Helical; Name=6" evidence="2">
    <location>
        <begin position="161"/>
        <end position="181"/>
    </location>
</feature>
<feature type="topological domain" description="Extracellular" evidence="2">
    <location>
        <begin position="182"/>
        <end position="194"/>
    </location>
</feature>
<feature type="transmembrane region" description="Helical; Name=7" evidence="2">
    <location>
        <begin position="195"/>
        <end position="215"/>
    </location>
</feature>
<feature type="topological domain" description="Cytoplasmic" evidence="2">
    <location>
        <begin position="216"/>
        <end position="257" status="greater than"/>
    </location>
</feature>
<feature type="disulfide bond" evidence="3">
    <location>
        <begin position="20"/>
        <end position="97"/>
    </location>
</feature>
<feature type="non-terminal residue">
    <location>
        <position position="1"/>
    </location>
</feature>
<feature type="non-terminal residue">
    <location>
        <position position="257"/>
    </location>
</feature>
<keyword id="KW-1003">Cell membrane</keyword>
<keyword id="KW-1015">Disulfide bond</keyword>
<keyword id="KW-0297">G-protein coupled receptor</keyword>
<keyword id="KW-0472">Membrane</keyword>
<keyword id="KW-0675">Receptor</keyword>
<keyword id="KW-1185">Reference proteome</keyword>
<keyword id="KW-0807">Transducer</keyword>
<keyword id="KW-0812">Transmembrane</keyword>
<keyword id="KW-1133">Transmembrane helix</keyword>
<organism>
    <name type="scientific">Bos taurus</name>
    <name type="common">Bovine</name>
    <dbReference type="NCBI Taxonomy" id="9913"/>
    <lineage>
        <taxon>Eukaryota</taxon>
        <taxon>Metazoa</taxon>
        <taxon>Chordata</taxon>
        <taxon>Craniata</taxon>
        <taxon>Vertebrata</taxon>
        <taxon>Euteleostomi</taxon>
        <taxon>Mammalia</taxon>
        <taxon>Eutheria</taxon>
        <taxon>Laurasiatheria</taxon>
        <taxon>Artiodactyla</taxon>
        <taxon>Ruminantia</taxon>
        <taxon>Pecora</taxon>
        <taxon>Bovidae</taxon>
        <taxon>Bovinae</taxon>
        <taxon>Bos</taxon>
    </lineage>
</organism>
<sequence>YPLALASIVNDGWSLSSLHCQLSGFLMGLSVIGSVFNITGIAINRYCCICHSLRYNKLYSSTNSLCYVFLIWMLTLVAIVPNLCVGTLQYDPRIYSCTFTQSVSSAYTIAVVVFHFIVPMLVVIFCYLRIWALVLQVRWRVKPDNKPKLKPQDFRNFVTMFVVFVLFAICWAPLNFIGLVVASEPASMAPRIPEWLFVASYYMGYFNSCLNAIIYGLLNQNFRQEYRKIIVSLCTTKMFFVDSSNHVAHRIKRKPSP</sequence>
<accession>O02769</accession>
<gene>
    <name type="primary">MTNR1A</name>
</gene>